<sequence length="91" mass="10018">MANTAQARKRVLQNEKRRLHNASLRSRLRTYVKGVLKAVHVGDQEQARSALRAAESVIDKTVGKGVAHRNMAARTKSRLSARVKAMGNAAQ</sequence>
<comment type="function">
    <text evidence="1">Binds directly to 16S ribosomal RNA.</text>
</comment>
<comment type="similarity">
    <text evidence="1">Belongs to the bacterial ribosomal protein bS20 family.</text>
</comment>
<dbReference type="EMBL" id="CP001219">
    <property type="protein sequence ID" value="ACK80554.1"/>
    <property type="molecule type" value="Genomic_DNA"/>
</dbReference>
<dbReference type="RefSeq" id="WP_009567470.1">
    <property type="nucleotide sequence ID" value="NC_011761.1"/>
</dbReference>
<dbReference type="SMR" id="B7J5H6"/>
<dbReference type="STRING" id="243159.AFE_2188"/>
<dbReference type="PaxDb" id="243159-AFE_2188"/>
<dbReference type="GeneID" id="65281308"/>
<dbReference type="KEGG" id="afr:AFE_2188"/>
<dbReference type="eggNOG" id="COG0268">
    <property type="taxonomic scope" value="Bacteria"/>
</dbReference>
<dbReference type="HOGENOM" id="CLU_160655_4_0_6"/>
<dbReference type="Proteomes" id="UP000001362">
    <property type="component" value="Chromosome"/>
</dbReference>
<dbReference type="GO" id="GO:0005829">
    <property type="term" value="C:cytosol"/>
    <property type="evidence" value="ECO:0007669"/>
    <property type="project" value="TreeGrafter"/>
</dbReference>
<dbReference type="GO" id="GO:0015935">
    <property type="term" value="C:small ribosomal subunit"/>
    <property type="evidence" value="ECO:0007669"/>
    <property type="project" value="TreeGrafter"/>
</dbReference>
<dbReference type="GO" id="GO:0070181">
    <property type="term" value="F:small ribosomal subunit rRNA binding"/>
    <property type="evidence" value="ECO:0007669"/>
    <property type="project" value="TreeGrafter"/>
</dbReference>
<dbReference type="GO" id="GO:0003735">
    <property type="term" value="F:structural constituent of ribosome"/>
    <property type="evidence" value="ECO:0007669"/>
    <property type="project" value="InterPro"/>
</dbReference>
<dbReference type="GO" id="GO:0006412">
    <property type="term" value="P:translation"/>
    <property type="evidence" value="ECO:0007669"/>
    <property type="project" value="UniProtKB-UniRule"/>
</dbReference>
<dbReference type="FunFam" id="1.20.58.110:FF:000001">
    <property type="entry name" value="30S ribosomal protein S20"/>
    <property type="match status" value="1"/>
</dbReference>
<dbReference type="Gene3D" id="1.20.58.110">
    <property type="entry name" value="Ribosomal protein S20"/>
    <property type="match status" value="1"/>
</dbReference>
<dbReference type="HAMAP" id="MF_00500">
    <property type="entry name" value="Ribosomal_bS20"/>
    <property type="match status" value="1"/>
</dbReference>
<dbReference type="InterPro" id="IPR002583">
    <property type="entry name" value="Ribosomal_bS20"/>
</dbReference>
<dbReference type="InterPro" id="IPR036510">
    <property type="entry name" value="Ribosomal_bS20_sf"/>
</dbReference>
<dbReference type="NCBIfam" id="TIGR00029">
    <property type="entry name" value="S20"/>
    <property type="match status" value="1"/>
</dbReference>
<dbReference type="PANTHER" id="PTHR33398">
    <property type="entry name" value="30S RIBOSOMAL PROTEIN S20"/>
    <property type="match status" value="1"/>
</dbReference>
<dbReference type="PANTHER" id="PTHR33398:SF1">
    <property type="entry name" value="SMALL RIBOSOMAL SUBUNIT PROTEIN BS20C"/>
    <property type="match status" value="1"/>
</dbReference>
<dbReference type="Pfam" id="PF01649">
    <property type="entry name" value="Ribosomal_S20p"/>
    <property type="match status" value="1"/>
</dbReference>
<dbReference type="SUPFAM" id="SSF46992">
    <property type="entry name" value="Ribosomal protein S20"/>
    <property type="match status" value="1"/>
</dbReference>
<organism>
    <name type="scientific">Acidithiobacillus ferrooxidans (strain ATCC 23270 / DSM 14882 / CIP 104768 / NCIMB 8455)</name>
    <name type="common">Ferrobacillus ferrooxidans (strain ATCC 23270)</name>
    <dbReference type="NCBI Taxonomy" id="243159"/>
    <lineage>
        <taxon>Bacteria</taxon>
        <taxon>Pseudomonadati</taxon>
        <taxon>Pseudomonadota</taxon>
        <taxon>Acidithiobacillia</taxon>
        <taxon>Acidithiobacillales</taxon>
        <taxon>Acidithiobacillaceae</taxon>
        <taxon>Acidithiobacillus</taxon>
    </lineage>
</organism>
<gene>
    <name evidence="1" type="primary">rpsT</name>
    <name type="ordered locus">AFE_2188</name>
</gene>
<evidence type="ECO:0000255" key="1">
    <source>
        <dbReference type="HAMAP-Rule" id="MF_00500"/>
    </source>
</evidence>
<evidence type="ECO:0000305" key="2"/>
<reference key="1">
    <citation type="journal article" date="2008" name="BMC Genomics">
        <title>Acidithiobacillus ferrooxidans metabolism: from genome sequence to industrial applications.</title>
        <authorList>
            <person name="Valdes J."/>
            <person name="Pedroso I."/>
            <person name="Quatrini R."/>
            <person name="Dodson R.J."/>
            <person name="Tettelin H."/>
            <person name="Blake R. II"/>
            <person name="Eisen J.A."/>
            <person name="Holmes D.S."/>
        </authorList>
    </citation>
    <scope>NUCLEOTIDE SEQUENCE [LARGE SCALE GENOMIC DNA]</scope>
    <source>
        <strain>ATCC 23270 / DSM 14882 / CIP 104768 / NCIMB 8455</strain>
    </source>
</reference>
<accession>B7J5H6</accession>
<name>RS20_ACIF2</name>
<feature type="chain" id="PRO_1000126387" description="Small ribosomal subunit protein bS20">
    <location>
        <begin position="1"/>
        <end position="91"/>
    </location>
</feature>
<proteinExistence type="inferred from homology"/>
<protein>
    <recommendedName>
        <fullName evidence="1">Small ribosomal subunit protein bS20</fullName>
    </recommendedName>
    <alternativeName>
        <fullName evidence="2">30S ribosomal protein S20</fullName>
    </alternativeName>
</protein>
<keyword id="KW-1185">Reference proteome</keyword>
<keyword id="KW-0687">Ribonucleoprotein</keyword>
<keyword id="KW-0689">Ribosomal protein</keyword>
<keyword id="KW-0694">RNA-binding</keyword>
<keyword id="KW-0699">rRNA-binding</keyword>